<feature type="chain" id="PRO_1000011058" description="N-acetyl-gamma-glutamyl-phosphate reductase">
    <location>
        <begin position="1"/>
        <end position="326"/>
    </location>
</feature>
<feature type="active site" evidence="1">
    <location>
        <position position="155"/>
    </location>
</feature>
<keyword id="KW-0028">Amino-acid biosynthesis</keyword>
<keyword id="KW-0055">Arginine biosynthesis</keyword>
<keyword id="KW-0963">Cytoplasm</keyword>
<keyword id="KW-0521">NADP</keyword>
<keyword id="KW-0560">Oxidoreductase</keyword>
<keyword id="KW-1185">Reference proteome</keyword>
<name>ARGC_SHEDO</name>
<proteinExistence type="inferred from homology"/>
<dbReference type="EC" id="1.2.1.38" evidence="1"/>
<dbReference type="EMBL" id="CP000302">
    <property type="protein sequence ID" value="ABE53546.1"/>
    <property type="molecule type" value="Genomic_DNA"/>
</dbReference>
<dbReference type="RefSeq" id="WP_011494713.1">
    <property type="nucleotide sequence ID" value="NC_007954.1"/>
</dbReference>
<dbReference type="SMR" id="Q12SN0"/>
<dbReference type="STRING" id="318161.Sden_0250"/>
<dbReference type="KEGG" id="sdn:Sden_0250"/>
<dbReference type="eggNOG" id="COG0002">
    <property type="taxonomic scope" value="Bacteria"/>
</dbReference>
<dbReference type="HOGENOM" id="CLU_006384_0_1_6"/>
<dbReference type="OrthoDB" id="9801289at2"/>
<dbReference type="UniPathway" id="UPA00068">
    <property type="reaction ID" value="UER00108"/>
</dbReference>
<dbReference type="Proteomes" id="UP000001982">
    <property type="component" value="Chromosome"/>
</dbReference>
<dbReference type="GO" id="GO:0005737">
    <property type="term" value="C:cytoplasm"/>
    <property type="evidence" value="ECO:0007669"/>
    <property type="project" value="UniProtKB-SubCell"/>
</dbReference>
<dbReference type="GO" id="GO:0003942">
    <property type="term" value="F:N-acetyl-gamma-glutamyl-phosphate reductase activity"/>
    <property type="evidence" value="ECO:0007669"/>
    <property type="project" value="UniProtKB-UniRule"/>
</dbReference>
<dbReference type="GO" id="GO:0051287">
    <property type="term" value="F:NAD binding"/>
    <property type="evidence" value="ECO:0007669"/>
    <property type="project" value="InterPro"/>
</dbReference>
<dbReference type="GO" id="GO:0070401">
    <property type="term" value="F:NADP+ binding"/>
    <property type="evidence" value="ECO:0007669"/>
    <property type="project" value="InterPro"/>
</dbReference>
<dbReference type="GO" id="GO:0006526">
    <property type="term" value="P:L-arginine biosynthetic process"/>
    <property type="evidence" value="ECO:0007669"/>
    <property type="project" value="UniProtKB-UniRule"/>
</dbReference>
<dbReference type="CDD" id="cd23934">
    <property type="entry name" value="AGPR_1_C"/>
    <property type="match status" value="1"/>
</dbReference>
<dbReference type="CDD" id="cd17895">
    <property type="entry name" value="AGPR_1_N"/>
    <property type="match status" value="1"/>
</dbReference>
<dbReference type="FunFam" id="3.30.360.10:FF:000014">
    <property type="entry name" value="N-acetyl-gamma-glutamyl-phosphate reductase"/>
    <property type="match status" value="1"/>
</dbReference>
<dbReference type="Gene3D" id="3.30.360.10">
    <property type="entry name" value="Dihydrodipicolinate Reductase, domain 2"/>
    <property type="match status" value="1"/>
</dbReference>
<dbReference type="Gene3D" id="3.40.50.720">
    <property type="entry name" value="NAD(P)-binding Rossmann-like Domain"/>
    <property type="match status" value="1"/>
</dbReference>
<dbReference type="HAMAP" id="MF_00150">
    <property type="entry name" value="ArgC_type1"/>
    <property type="match status" value="1"/>
</dbReference>
<dbReference type="InterPro" id="IPR023013">
    <property type="entry name" value="AGPR_AS"/>
</dbReference>
<dbReference type="InterPro" id="IPR000706">
    <property type="entry name" value="AGPR_type-1"/>
</dbReference>
<dbReference type="InterPro" id="IPR036291">
    <property type="entry name" value="NAD(P)-bd_dom_sf"/>
</dbReference>
<dbReference type="InterPro" id="IPR050085">
    <property type="entry name" value="NAGSA_dehydrogenase"/>
</dbReference>
<dbReference type="InterPro" id="IPR000534">
    <property type="entry name" value="Semialdehyde_DH_NAD-bd"/>
</dbReference>
<dbReference type="NCBIfam" id="TIGR01850">
    <property type="entry name" value="argC"/>
    <property type="match status" value="1"/>
</dbReference>
<dbReference type="PANTHER" id="PTHR32338:SF10">
    <property type="entry name" value="N-ACETYL-GAMMA-GLUTAMYL-PHOSPHATE REDUCTASE, CHLOROPLASTIC-RELATED"/>
    <property type="match status" value="1"/>
</dbReference>
<dbReference type="PANTHER" id="PTHR32338">
    <property type="entry name" value="N-ACETYL-GAMMA-GLUTAMYL-PHOSPHATE REDUCTASE, CHLOROPLASTIC-RELATED-RELATED"/>
    <property type="match status" value="1"/>
</dbReference>
<dbReference type="Pfam" id="PF01118">
    <property type="entry name" value="Semialdhyde_dh"/>
    <property type="match status" value="1"/>
</dbReference>
<dbReference type="Pfam" id="PF22698">
    <property type="entry name" value="Semialdhyde_dhC_1"/>
    <property type="match status" value="1"/>
</dbReference>
<dbReference type="SMART" id="SM00859">
    <property type="entry name" value="Semialdhyde_dh"/>
    <property type="match status" value="1"/>
</dbReference>
<dbReference type="SUPFAM" id="SSF55347">
    <property type="entry name" value="Glyceraldehyde-3-phosphate dehydrogenase-like, C-terminal domain"/>
    <property type="match status" value="1"/>
</dbReference>
<dbReference type="SUPFAM" id="SSF51735">
    <property type="entry name" value="NAD(P)-binding Rossmann-fold domains"/>
    <property type="match status" value="1"/>
</dbReference>
<dbReference type="PROSITE" id="PS01224">
    <property type="entry name" value="ARGC"/>
    <property type="match status" value="1"/>
</dbReference>
<protein>
    <recommendedName>
        <fullName evidence="1">N-acetyl-gamma-glutamyl-phosphate reductase</fullName>
        <shortName evidence="1">AGPR</shortName>
        <ecNumber evidence="1">1.2.1.38</ecNumber>
    </recommendedName>
    <alternativeName>
        <fullName evidence="1">N-acetyl-glutamate semialdehyde dehydrogenase</fullName>
        <shortName evidence="1">NAGSA dehydrogenase</shortName>
    </alternativeName>
</protein>
<sequence length="326" mass="35336">MKNIAIIGASGYTGAQITSLIHADAGLSVQGLYVSENSLDKGRELSELYPLYSHLPYVLNPLSDDVKAKIVAESDAVVLATEHSVSLELAAWFYQQGLAVFDLSGAYRFADVAQYPKWYGFEHTHPDVLAEAVYGLAEWNAAEIAKTRMIAVPGCYPTASLTALKPLKSLLTSAYPVINAVSGVTGAGRKAHLHTSFCEVSLTPYGVLGHRHQPEIATQLGQEVIFTPHLGNFKRGILATITVQLQPGTTEEQVKQAYEVYDNSPLVTVKHNAFPKVDDVVHTPNCHLGWKYDANSGYLVVASAIDNLMKGAASQGLQCIKIHFNL</sequence>
<organism>
    <name type="scientific">Shewanella denitrificans (strain OS217 / ATCC BAA-1090 / DSM 15013)</name>
    <dbReference type="NCBI Taxonomy" id="318161"/>
    <lineage>
        <taxon>Bacteria</taxon>
        <taxon>Pseudomonadati</taxon>
        <taxon>Pseudomonadota</taxon>
        <taxon>Gammaproteobacteria</taxon>
        <taxon>Alteromonadales</taxon>
        <taxon>Shewanellaceae</taxon>
        <taxon>Shewanella</taxon>
    </lineage>
</organism>
<accession>Q12SN0</accession>
<reference key="1">
    <citation type="submission" date="2006-03" db="EMBL/GenBank/DDBJ databases">
        <title>Complete sequence of Shewanella denitrificans OS217.</title>
        <authorList>
            <consortium name="US DOE Joint Genome Institute"/>
            <person name="Copeland A."/>
            <person name="Lucas S."/>
            <person name="Lapidus A."/>
            <person name="Barry K."/>
            <person name="Detter J.C."/>
            <person name="Glavina del Rio T."/>
            <person name="Hammon N."/>
            <person name="Israni S."/>
            <person name="Dalin E."/>
            <person name="Tice H."/>
            <person name="Pitluck S."/>
            <person name="Brettin T."/>
            <person name="Bruce D."/>
            <person name="Han C."/>
            <person name="Tapia R."/>
            <person name="Gilna P."/>
            <person name="Kiss H."/>
            <person name="Schmutz J."/>
            <person name="Larimer F."/>
            <person name="Land M."/>
            <person name="Hauser L."/>
            <person name="Kyrpides N."/>
            <person name="Lykidis A."/>
            <person name="Richardson P."/>
        </authorList>
    </citation>
    <scope>NUCLEOTIDE SEQUENCE [LARGE SCALE GENOMIC DNA]</scope>
    <source>
        <strain>OS217 / ATCC BAA-1090 / DSM 15013</strain>
    </source>
</reference>
<gene>
    <name evidence="1" type="primary">argC</name>
    <name type="ordered locus">Sden_0250</name>
</gene>
<comment type="function">
    <text evidence="1">Catalyzes the NADPH-dependent reduction of N-acetyl-5-glutamyl phosphate to yield N-acetyl-L-glutamate 5-semialdehyde.</text>
</comment>
<comment type="catalytic activity">
    <reaction evidence="1">
        <text>N-acetyl-L-glutamate 5-semialdehyde + phosphate + NADP(+) = N-acetyl-L-glutamyl 5-phosphate + NADPH + H(+)</text>
        <dbReference type="Rhea" id="RHEA:21588"/>
        <dbReference type="ChEBI" id="CHEBI:15378"/>
        <dbReference type="ChEBI" id="CHEBI:29123"/>
        <dbReference type="ChEBI" id="CHEBI:43474"/>
        <dbReference type="ChEBI" id="CHEBI:57783"/>
        <dbReference type="ChEBI" id="CHEBI:57936"/>
        <dbReference type="ChEBI" id="CHEBI:58349"/>
        <dbReference type="EC" id="1.2.1.38"/>
    </reaction>
</comment>
<comment type="pathway">
    <text evidence="1">Amino-acid biosynthesis; L-arginine biosynthesis; N(2)-acetyl-L-ornithine from L-glutamate: step 3/4.</text>
</comment>
<comment type="subcellular location">
    <subcellularLocation>
        <location evidence="1">Cytoplasm</location>
    </subcellularLocation>
</comment>
<comment type="similarity">
    <text evidence="1">Belongs to the NAGSA dehydrogenase family. Type 1 subfamily.</text>
</comment>
<evidence type="ECO:0000255" key="1">
    <source>
        <dbReference type="HAMAP-Rule" id="MF_00150"/>
    </source>
</evidence>